<accession>Q5P766</accession>
<protein>
    <recommendedName>
        <fullName evidence="1">Glycine--tRNA ligase beta subunit</fullName>
        <ecNumber evidence="1">6.1.1.14</ecNumber>
    </recommendedName>
    <alternativeName>
        <fullName evidence="1">Glycyl-tRNA synthetase beta subunit</fullName>
        <shortName evidence="1">GlyRS</shortName>
    </alternativeName>
</protein>
<sequence>MMTTATVLVELLTEELPPKALPRLGETFAAKVFEGLKARDLVAEDRGFRCFAAPRRLAVTVPTVRAAAPSREVTEKIMPVQVALDAEGRPTPALLKKLQAKGIAPEAVASFERRVDGKAEALFYTHLEPGAALDDVLAAIVQEAVKALPIPKLMRWGAGDAQFVRPVHKLAMLHGARVVPGRVLDLDAGRVTMGHRFMSRGEIELATAEAYEPTLLAEGKVIPDFAERRSNIERQLVATAQEQGASLGEYADLLDEVAALVEHPTVYVGEFELEFLAVPQECLILTMRANQKYFPLFDAAGKLLNRFLIVSNMRLADPSNIVAGNQRVVRPRLSDARFFFEQDRKHTLDSRLPRLAPVVYHNKLGSQLERVERLERLAGRIADRLHGDVAAASRAARLAKADLVTDMVGEFPELQGIMGRYYALNDGEGEVVADAVQSHYQPRFAGDTLPAGNTACAVALADKLDTLVGFFGIGQLPTGDKDPFGLRRAALGVLRILIETPLPLDLAALVGDAAEGFAPGLLTAADFESQLLDFMFERLRNLLREAGHAVDVVDAVLALHPTRIDLVPAKLDAVRVFRGLPEAEALAAANKRIVNILKKAEDELPEPDVALLQEQAEKALFHAVVEVAPLVHSHVANEDYTDALCALAGLRAAVDTFFDDVMVMVEEPLTRRNRLALLRQLAGLMNQVADLSRLSA</sequence>
<organism>
    <name type="scientific">Aromatoleum aromaticum (strain DSM 19018 / LMG 30748 / EbN1)</name>
    <name type="common">Azoarcus sp. (strain EbN1)</name>
    <dbReference type="NCBI Taxonomy" id="76114"/>
    <lineage>
        <taxon>Bacteria</taxon>
        <taxon>Pseudomonadati</taxon>
        <taxon>Pseudomonadota</taxon>
        <taxon>Betaproteobacteria</taxon>
        <taxon>Rhodocyclales</taxon>
        <taxon>Rhodocyclaceae</taxon>
        <taxon>Aromatoleum</taxon>
    </lineage>
</organism>
<proteinExistence type="inferred from homology"/>
<feature type="chain" id="PRO_1000197169" description="Glycine--tRNA ligase beta subunit">
    <location>
        <begin position="1"/>
        <end position="696"/>
    </location>
</feature>
<reference key="1">
    <citation type="journal article" date="2005" name="Arch. Microbiol.">
        <title>The genome sequence of an anaerobic aromatic-degrading denitrifying bacterium, strain EbN1.</title>
        <authorList>
            <person name="Rabus R."/>
            <person name="Kube M."/>
            <person name="Heider J."/>
            <person name="Beck A."/>
            <person name="Heitmann K."/>
            <person name="Widdel F."/>
            <person name="Reinhardt R."/>
        </authorList>
    </citation>
    <scope>NUCLEOTIDE SEQUENCE [LARGE SCALE GENOMIC DNA]</scope>
    <source>
        <strain>DSM 19018 / LMG 30748 / EbN1</strain>
    </source>
</reference>
<evidence type="ECO:0000255" key="1">
    <source>
        <dbReference type="HAMAP-Rule" id="MF_00255"/>
    </source>
</evidence>
<comment type="catalytic activity">
    <reaction evidence="1">
        <text>tRNA(Gly) + glycine + ATP = glycyl-tRNA(Gly) + AMP + diphosphate</text>
        <dbReference type="Rhea" id="RHEA:16013"/>
        <dbReference type="Rhea" id="RHEA-COMP:9664"/>
        <dbReference type="Rhea" id="RHEA-COMP:9683"/>
        <dbReference type="ChEBI" id="CHEBI:30616"/>
        <dbReference type="ChEBI" id="CHEBI:33019"/>
        <dbReference type="ChEBI" id="CHEBI:57305"/>
        <dbReference type="ChEBI" id="CHEBI:78442"/>
        <dbReference type="ChEBI" id="CHEBI:78522"/>
        <dbReference type="ChEBI" id="CHEBI:456215"/>
        <dbReference type="EC" id="6.1.1.14"/>
    </reaction>
</comment>
<comment type="subunit">
    <text evidence="1">Tetramer of two alpha and two beta subunits.</text>
</comment>
<comment type="subcellular location">
    <subcellularLocation>
        <location evidence="1">Cytoplasm</location>
    </subcellularLocation>
</comment>
<comment type="similarity">
    <text evidence="1">Belongs to the class-II aminoacyl-tRNA synthetase family.</text>
</comment>
<keyword id="KW-0030">Aminoacyl-tRNA synthetase</keyword>
<keyword id="KW-0067">ATP-binding</keyword>
<keyword id="KW-0963">Cytoplasm</keyword>
<keyword id="KW-0436">Ligase</keyword>
<keyword id="KW-0547">Nucleotide-binding</keyword>
<keyword id="KW-0648">Protein biosynthesis</keyword>
<keyword id="KW-1185">Reference proteome</keyword>
<gene>
    <name evidence="1" type="primary">glyS</name>
    <name type="ordered locus">AZOSEA07220</name>
    <name type="ORF">ebA1330</name>
</gene>
<dbReference type="EC" id="6.1.1.14" evidence="1"/>
<dbReference type="EMBL" id="CR555306">
    <property type="protein sequence ID" value="CAI06845.1"/>
    <property type="molecule type" value="Genomic_DNA"/>
</dbReference>
<dbReference type="SMR" id="Q5P766"/>
<dbReference type="STRING" id="76114.ebA1330"/>
<dbReference type="KEGG" id="eba:ebA1330"/>
<dbReference type="eggNOG" id="COG0751">
    <property type="taxonomic scope" value="Bacteria"/>
</dbReference>
<dbReference type="HOGENOM" id="CLU_007220_2_2_4"/>
<dbReference type="Proteomes" id="UP000006552">
    <property type="component" value="Chromosome"/>
</dbReference>
<dbReference type="GO" id="GO:0005829">
    <property type="term" value="C:cytosol"/>
    <property type="evidence" value="ECO:0007669"/>
    <property type="project" value="TreeGrafter"/>
</dbReference>
<dbReference type="GO" id="GO:0004814">
    <property type="term" value="F:arginine-tRNA ligase activity"/>
    <property type="evidence" value="ECO:0007669"/>
    <property type="project" value="InterPro"/>
</dbReference>
<dbReference type="GO" id="GO:0005524">
    <property type="term" value="F:ATP binding"/>
    <property type="evidence" value="ECO:0007669"/>
    <property type="project" value="UniProtKB-UniRule"/>
</dbReference>
<dbReference type="GO" id="GO:0004820">
    <property type="term" value="F:glycine-tRNA ligase activity"/>
    <property type="evidence" value="ECO:0007669"/>
    <property type="project" value="UniProtKB-UniRule"/>
</dbReference>
<dbReference type="GO" id="GO:0006420">
    <property type="term" value="P:arginyl-tRNA aminoacylation"/>
    <property type="evidence" value="ECO:0007669"/>
    <property type="project" value="InterPro"/>
</dbReference>
<dbReference type="GO" id="GO:0006426">
    <property type="term" value="P:glycyl-tRNA aminoacylation"/>
    <property type="evidence" value="ECO:0007669"/>
    <property type="project" value="UniProtKB-UniRule"/>
</dbReference>
<dbReference type="Gene3D" id="1.10.730.10">
    <property type="entry name" value="Isoleucyl-tRNA Synthetase, Domain 1"/>
    <property type="match status" value="1"/>
</dbReference>
<dbReference type="HAMAP" id="MF_00255">
    <property type="entry name" value="Gly_tRNA_synth_beta"/>
    <property type="match status" value="1"/>
</dbReference>
<dbReference type="InterPro" id="IPR008909">
    <property type="entry name" value="DALR_anticod-bd"/>
</dbReference>
<dbReference type="InterPro" id="IPR015944">
    <property type="entry name" value="Gly-tRNA-synth_bsu"/>
</dbReference>
<dbReference type="InterPro" id="IPR006194">
    <property type="entry name" value="Gly-tRNA-synth_heterodimer"/>
</dbReference>
<dbReference type="NCBIfam" id="TIGR00211">
    <property type="entry name" value="glyS"/>
    <property type="match status" value="1"/>
</dbReference>
<dbReference type="PANTHER" id="PTHR30075:SF2">
    <property type="entry name" value="GLYCINE--TRNA LIGASE, CHLOROPLASTIC_MITOCHONDRIAL 2"/>
    <property type="match status" value="1"/>
</dbReference>
<dbReference type="PANTHER" id="PTHR30075">
    <property type="entry name" value="GLYCYL-TRNA SYNTHETASE"/>
    <property type="match status" value="1"/>
</dbReference>
<dbReference type="Pfam" id="PF05746">
    <property type="entry name" value="DALR_1"/>
    <property type="match status" value="1"/>
</dbReference>
<dbReference type="Pfam" id="PF02092">
    <property type="entry name" value="tRNA_synt_2f"/>
    <property type="match status" value="1"/>
</dbReference>
<dbReference type="PRINTS" id="PR01045">
    <property type="entry name" value="TRNASYNTHGB"/>
</dbReference>
<dbReference type="SUPFAM" id="SSF109604">
    <property type="entry name" value="HD-domain/PDEase-like"/>
    <property type="match status" value="1"/>
</dbReference>
<dbReference type="PROSITE" id="PS50861">
    <property type="entry name" value="AA_TRNA_LIGASE_II_GLYAB"/>
    <property type="match status" value="1"/>
</dbReference>
<name>SYGB_AROAE</name>